<accession>E3GCF1</accession>
<reference key="1">
    <citation type="journal article" date="2011" name="Stand. Genomic Sci.">
        <title>Complete genome sequence of 'Enterobacter lignolyticus' SCF1.</title>
        <authorList>
            <person name="Deangelis K.M."/>
            <person name="D'Haeseleer P."/>
            <person name="Chivian D."/>
            <person name="Fortney J.L."/>
            <person name="Khudyakov J."/>
            <person name="Simmons B."/>
            <person name="Woo H."/>
            <person name="Arkin A.P."/>
            <person name="Davenport K.W."/>
            <person name="Goodwin L."/>
            <person name="Chen A."/>
            <person name="Ivanova N."/>
            <person name="Kyrpides N.C."/>
            <person name="Mavromatis K."/>
            <person name="Woyke T."/>
            <person name="Hazen T.C."/>
        </authorList>
    </citation>
    <scope>NUCLEOTIDE SEQUENCE [LARGE SCALE GENOMIC DNA]</scope>
    <source>
        <strain>SCF1</strain>
    </source>
</reference>
<gene>
    <name evidence="1" type="primary">gpdQ</name>
    <name type="ordered locus">Entcl_3882</name>
</gene>
<organism>
    <name type="scientific">Enterobacter lignolyticus (strain SCF1)</name>
    <dbReference type="NCBI Taxonomy" id="701347"/>
    <lineage>
        <taxon>Bacteria</taxon>
        <taxon>Pseudomonadati</taxon>
        <taxon>Pseudomonadota</taxon>
        <taxon>Gammaproteobacteria</taxon>
        <taxon>Enterobacterales</taxon>
        <taxon>Enterobacteriaceae</taxon>
        <taxon>Pluralibacter</taxon>
    </lineage>
</organism>
<evidence type="ECO:0000250" key="1">
    <source>
        <dbReference type="UniProtKB" id="Q6XBH1"/>
    </source>
</evidence>
<evidence type="ECO:0000305" key="2"/>
<name>GPDQ_ENTLS</name>
<keyword id="KW-0319">Glycerol metabolism</keyword>
<keyword id="KW-0378">Hydrolase</keyword>
<keyword id="KW-0408">Iron</keyword>
<keyword id="KW-0479">Metal-binding</keyword>
<keyword id="KW-1185">Reference proteome</keyword>
<proteinExistence type="inferred from homology"/>
<sequence>MLLAHISDTHFRSQNHKLYGFIDVNAGNADVVSQLNGLRERPDAVVVSGDIVNCGRPEEYQVARQVLGALRYPLLLIPGNHDDKACFLEYLRPLCPQLGSDPQNMRYAIDDFATRLLFIDSSLAGHAKGWLTDNTVAWLEAQLSDAGDKPTAVFMHHPPLPLGNAQMDPIACENGHRLLALVERFPSLVRIFCGHNHNLTMTQYRQATIATLPATVHQVPYCHEDTRPYYDMSPPSCLMHRQVGEQWVSYQHSLAHYAGPWLYDEHISCPTDERRSPC</sequence>
<feature type="chain" id="PRO_0000413367" description="Glycerophosphodiester phosphodiesterase GpdQ">
    <location>
        <begin position="1"/>
        <end position="278"/>
    </location>
</feature>
<feature type="binding site" evidence="1">
    <location>
        <position position="8"/>
    </location>
    <ligand>
        <name>Fe cation</name>
        <dbReference type="ChEBI" id="CHEBI:24875"/>
        <label>1</label>
    </ligand>
</feature>
<feature type="binding site" evidence="1">
    <location>
        <position position="10"/>
    </location>
    <ligand>
        <name>Fe cation</name>
        <dbReference type="ChEBI" id="CHEBI:24875"/>
        <label>1</label>
    </ligand>
</feature>
<feature type="binding site" evidence="1">
    <location>
        <position position="50"/>
    </location>
    <ligand>
        <name>Fe cation</name>
        <dbReference type="ChEBI" id="CHEBI:24875"/>
        <label>1</label>
    </ligand>
</feature>
<feature type="binding site" evidence="1">
    <location>
        <position position="50"/>
    </location>
    <ligand>
        <name>Fe cation</name>
        <dbReference type="ChEBI" id="CHEBI:24875"/>
        <label>2</label>
    </ligand>
</feature>
<feature type="binding site" evidence="1">
    <location>
        <position position="80"/>
    </location>
    <ligand>
        <name>Fe cation</name>
        <dbReference type="ChEBI" id="CHEBI:24875"/>
        <label>2</label>
    </ligand>
</feature>
<feature type="binding site" evidence="1">
    <location>
        <position position="156"/>
    </location>
    <ligand>
        <name>Fe cation</name>
        <dbReference type="ChEBI" id="CHEBI:24875"/>
        <label>2</label>
    </ligand>
</feature>
<feature type="binding site" evidence="1">
    <location>
        <position position="195"/>
    </location>
    <ligand>
        <name>Fe cation</name>
        <dbReference type="ChEBI" id="CHEBI:24875"/>
        <label>2</label>
    </ligand>
</feature>
<feature type="binding site" evidence="1">
    <location>
        <position position="197"/>
    </location>
    <ligand>
        <name>Fe cation</name>
        <dbReference type="ChEBI" id="CHEBI:24875"/>
        <label>1</label>
    </ligand>
</feature>
<comment type="function">
    <text evidence="1">Catalyzes the hydrolysis of the 3'-5' phosphodiester bond of glycerophosphodiesters such as glycerophosphorylethanolamine (GPE), a typical phospholipid metabolite.</text>
</comment>
<comment type="catalytic activity">
    <reaction evidence="1">
        <text>a sn-glycero-3-phosphodiester + H2O = an alcohol + sn-glycerol 3-phosphate + H(+)</text>
        <dbReference type="Rhea" id="RHEA:12969"/>
        <dbReference type="ChEBI" id="CHEBI:15377"/>
        <dbReference type="ChEBI" id="CHEBI:15378"/>
        <dbReference type="ChEBI" id="CHEBI:30879"/>
        <dbReference type="ChEBI" id="CHEBI:57597"/>
        <dbReference type="ChEBI" id="CHEBI:83408"/>
        <dbReference type="EC" id="3.1.4.46"/>
    </reaction>
</comment>
<comment type="catalytic activity">
    <reaction evidence="1">
        <text>sn-glycero-3-phosphoethanolamine + H2O = ethanolamine + sn-glycerol 3-phosphate + H(+)</text>
        <dbReference type="Rhea" id="RHEA:29319"/>
        <dbReference type="ChEBI" id="CHEBI:15377"/>
        <dbReference type="ChEBI" id="CHEBI:15378"/>
        <dbReference type="ChEBI" id="CHEBI:57597"/>
        <dbReference type="ChEBI" id="CHEBI:57603"/>
        <dbReference type="ChEBI" id="CHEBI:143890"/>
    </reaction>
</comment>
<comment type="cofactor">
    <cofactor evidence="1">
        <name>Fe(2+)</name>
        <dbReference type="ChEBI" id="CHEBI:29033"/>
    </cofactor>
    <text evidence="1">Binds 2 Fe(2+) ions per subunit.</text>
</comment>
<comment type="similarity">
    <text evidence="2">Belongs to the cyclic nucleotide phosphodiesterase class-III family.</text>
</comment>
<dbReference type="EC" id="3.1.4.46" evidence="1"/>
<dbReference type="EMBL" id="CP002272">
    <property type="protein sequence ID" value="ADO50122.1"/>
    <property type="molecule type" value="Genomic_DNA"/>
</dbReference>
<dbReference type="RefSeq" id="WP_013367845.1">
    <property type="nucleotide sequence ID" value="NC_014618.1"/>
</dbReference>
<dbReference type="SMR" id="E3GCF1"/>
<dbReference type="STRING" id="701347.Entcl_3882"/>
<dbReference type="KEGG" id="esc:Entcl_3882"/>
<dbReference type="eggNOG" id="COG1409">
    <property type="taxonomic scope" value="Bacteria"/>
</dbReference>
<dbReference type="HOGENOM" id="CLU_070320_2_1_6"/>
<dbReference type="Proteomes" id="UP000006872">
    <property type="component" value="Chromosome"/>
</dbReference>
<dbReference type="GO" id="GO:0004115">
    <property type="term" value="F:3',5'-cyclic-AMP phosphodiesterase activity"/>
    <property type="evidence" value="ECO:0007669"/>
    <property type="project" value="UniProtKB-EC"/>
</dbReference>
<dbReference type="GO" id="GO:0008889">
    <property type="term" value="F:glycerophosphodiester phosphodiesterase activity"/>
    <property type="evidence" value="ECO:0007669"/>
    <property type="project" value="RHEA"/>
</dbReference>
<dbReference type="GO" id="GO:0046872">
    <property type="term" value="F:metal ion binding"/>
    <property type="evidence" value="ECO:0007669"/>
    <property type="project" value="UniProtKB-KW"/>
</dbReference>
<dbReference type="GO" id="GO:0006071">
    <property type="term" value="P:glycerol metabolic process"/>
    <property type="evidence" value="ECO:0007669"/>
    <property type="project" value="UniProtKB-KW"/>
</dbReference>
<dbReference type="CDD" id="cd07402">
    <property type="entry name" value="MPP_GpdQ"/>
    <property type="match status" value="1"/>
</dbReference>
<dbReference type="Gene3D" id="3.30.750.180">
    <property type="entry name" value="GpdQ, beta-strand dimerisation domain"/>
    <property type="match status" value="1"/>
</dbReference>
<dbReference type="Gene3D" id="3.60.21.40">
    <property type="entry name" value="GpdQ, catalytic alpha/beta sandwich domain"/>
    <property type="match status" value="1"/>
</dbReference>
<dbReference type="InterPro" id="IPR004843">
    <property type="entry name" value="Calcineurin-like_PHP_ApaH"/>
</dbReference>
<dbReference type="InterPro" id="IPR050884">
    <property type="entry name" value="CNP_phosphodiesterase-III"/>
</dbReference>
<dbReference type="InterPro" id="IPR026575">
    <property type="entry name" value="GpdQ/CpdA-like"/>
</dbReference>
<dbReference type="InterPro" id="IPR042281">
    <property type="entry name" value="GpdQ_beta-strand"/>
</dbReference>
<dbReference type="InterPro" id="IPR042283">
    <property type="entry name" value="GpdQ_catalytic"/>
</dbReference>
<dbReference type="InterPro" id="IPR029052">
    <property type="entry name" value="Metallo-depent_PP-like"/>
</dbReference>
<dbReference type="PANTHER" id="PTHR42988:SF2">
    <property type="entry name" value="CYCLIC NUCLEOTIDE PHOSPHODIESTERASE CBUA0032-RELATED"/>
    <property type="match status" value="1"/>
</dbReference>
<dbReference type="PANTHER" id="PTHR42988">
    <property type="entry name" value="PHOSPHOHYDROLASE"/>
    <property type="match status" value="1"/>
</dbReference>
<dbReference type="Pfam" id="PF00149">
    <property type="entry name" value="Metallophos"/>
    <property type="match status" value="1"/>
</dbReference>
<dbReference type="SUPFAM" id="SSF56300">
    <property type="entry name" value="Metallo-dependent phosphatases"/>
    <property type="match status" value="1"/>
</dbReference>
<protein>
    <recommendedName>
        <fullName evidence="1">Glycerophosphodiester phosphodiesterase GpdQ</fullName>
        <shortName evidence="1">GDPD</shortName>
        <shortName evidence="1">Glycerophosphoryl diester phosphodiesterase</shortName>
        <ecNumber evidence="1">3.1.4.46</ecNumber>
    </recommendedName>
    <alternativeName>
        <fullName evidence="1">Glycerophosphodiesterase</fullName>
    </alternativeName>
    <alternativeName>
        <fullName evidence="1">Glycerophosphorylethanolamine phosphodiesterase</fullName>
        <shortName evidence="1">GPE phosphodiesterase</shortName>
    </alternativeName>
</protein>